<accession>A2BUE9</accession>
<comment type="function">
    <text evidence="1">NDH-1 shuttles electrons from an unknown electron donor, via FMN and iron-sulfur (Fe-S) centers, to quinones in the respiratory and/or the photosynthetic chain. The immediate electron acceptor for the enzyme in this species is believed to be plastoquinone. Couples the redox reaction to proton translocation, and thus conserves the redox energy in a proton gradient. Cyanobacterial NDH-1 also plays a role in inorganic carbon-concentration.</text>
</comment>
<comment type="catalytic activity">
    <reaction evidence="1">
        <text>a plastoquinone + NADH + (n+1) H(+)(in) = a plastoquinol + NAD(+) + n H(+)(out)</text>
        <dbReference type="Rhea" id="RHEA:42608"/>
        <dbReference type="Rhea" id="RHEA-COMP:9561"/>
        <dbReference type="Rhea" id="RHEA-COMP:9562"/>
        <dbReference type="ChEBI" id="CHEBI:15378"/>
        <dbReference type="ChEBI" id="CHEBI:17757"/>
        <dbReference type="ChEBI" id="CHEBI:57540"/>
        <dbReference type="ChEBI" id="CHEBI:57945"/>
        <dbReference type="ChEBI" id="CHEBI:62192"/>
    </reaction>
</comment>
<comment type="catalytic activity">
    <reaction evidence="1">
        <text>a plastoquinone + NADPH + (n+1) H(+)(in) = a plastoquinol + NADP(+) + n H(+)(out)</text>
        <dbReference type="Rhea" id="RHEA:42612"/>
        <dbReference type="Rhea" id="RHEA-COMP:9561"/>
        <dbReference type="Rhea" id="RHEA-COMP:9562"/>
        <dbReference type="ChEBI" id="CHEBI:15378"/>
        <dbReference type="ChEBI" id="CHEBI:17757"/>
        <dbReference type="ChEBI" id="CHEBI:57783"/>
        <dbReference type="ChEBI" id="CHEBI:58349"/>
        <dbReference type="ChEBI" id="CHEBI:62192"/>
    </reaction>
</comment>
<comment type="subunit">
    <text evidence="1">NDH-1 can be composed of about 15 different subunits; different subcomplexes with different compositions have been identified which probably have different functions.</text>
</comment>
<comment type="subcellular location">
    <subcellularLocation>
        <location evidence="1">Cellular thylakoid membrane</location>
        <topology evidence="1">Peripheral membrane protein</topology>
        <orientation evidence="1">Cytoplasmic side</orientation>
    </subcellularLocation>
</comment>
<comment type="similarity">
    <text evidence="1">Belongs to the complex I 49 kDa subunit family.</text>
</comment>
<reference key="1">
    <citation type="journal article" date="2007" name="PLoS Genet.">
        <title>Patterns and implications of gene gain and loss in the evolution of Prochlorococcus.</title>
        <authorList>
            <person name="Kettler G.C."/>
            <person name="Martiny A.C."/>
            <person name="Huang K."/>
            <person name="Zucker J."/>
            <person name="Coleman M.L."/>
            <person name="Rodrigue S."/>
            <person name="Chen F."/>
            <person name="Lapidus A."/>
            <person name="Ferriera S."/>
            <person name="Johnson J."/>
            <person name="Steglich C."/>
            <person name="Church G.M."/>
            <person name="Richardson P."/>
            <person name="Chisholm S.W."/>
        </authorList>
    </citation>
    <scope>NUCLEOTIDE SEQUENCE [LARGE SCALE GENOMIC DNA]</scope>
    <source>
        <strain>MIT 9515</strain>
    </source>
</reference>
<gene>
    <name evidence="1" type="primary">ndhH</name>
    <name type="ordered locus">P9515_02011</name>
</gene>
<sequence length="395" mass="45197">MAQLETRTEPMVVNFGPHHPSMHGVLRLVVTLDGENVIDCEPVIGYLHRGMEKIAENRTNVMYVPYVSRMDYAAGMFYEAIVVNAPERLANISVPKRASYIRVLMLELNRIANHLLWLGPFLADVGAQTPFFYIFREREMIYDLWEAATGQRLINNNFFRIGGVACDLPYGWLEKCIDFCDWFAPKIDEYEKLITNNPIFKKRIEGLGTIERDQAINWSLSGPMLRASGVSWDLRKVDNYECYDDFDWKIASEKEGDCYARYRVRVEEMRQSLKIIRQACEMIPGGPTENLEAKRMATDDKKSDIFGIDYQYVAKKVAPTFKIPNGELYTRLESGKGEIGVFIQGNNEVTPWRFKIRAADLNNLQILPHILKGAKIADIMAILGSIDVIMGSVDR</sequence>
<name>NDHH_PROM5</name>
<dbReference type="EC" id="7.1.1.-" evidence="1"/>
<dbReference type="EMBL" id="CP000552">
    <property type="protein sequence ID" value="ABM71410.1"/>
    <property type="molecule type" value="Genomic_DNA"/>
</dbReference>
<dbReference type="RefSeq" id="WP_011819524.1">
    <property type="nucleotide sequence ID" value="NC_008817.1"/>
</dbReference>
<dbReference type="SMR" id="A2BUE9"/>
<dbReference type="STRING" id="167542.P9515_02011"/>
<dbReference type="GeneID" id="60201860"/>
<dbReference type="KEGG" id="pmc:P9515_02011"/>
<dbReference type="eggNOG" id="COG0649">
    <property type="taxonomic scope" value="Bacteria"/>
</dbReference>
<dbReference type="HOGENOM" id="CLU_015134_1_2_3"/>
<dbReference type="OrthoDB" id="9801496at2"/>
<dbReference type="Proteomes" id="UP000001589">
    <property type="component" value="Chromosome"/>
</dbReference>
<dbReference type="GO" id="GO:0031676">
    <property type="term" value="C:plasma membrane-derived thylakoid membrane"/>
    <property type="evidence" value="ECO:0007669"/>
    <property type="project" value="UniProtKB-SubCell"/>
</dbReference>
<dbReference type="GO" id="GO:0051287">
    <property type="term" value="F:NAD binding"/>
    <property type="evidence" value="ECO:0007669"/>
    <property type="project" value="InterPro"/>
</dbReference>
<dbReference type="GO" id="GO:0016655">
    <property type="term" value="F:oxidoreductase activity, acting on NAD(P)H, quinone or similar compound as acceptor"/>
    <property type="evidence" value="ECO:0007669"/>
    <property type="project" value="UniProtKB-UniRule"/>
</dbReference>
<dbReference type="GO" id="GO:0048038">
    <property type="term" value="F:quinone binding"/>
    <property type="evidence" value="ECO:0007669"/>
    <property type="project" value="UniProtKB-KW"/>
</dbReference>
<dbReference type="GO" id="GO:0019684">
    <property type="term" value="P:photosynthesis, light reaction"/>
    <property type="evidence" value="ECO:0007669"/>
    <property type="project" value="UniProtKB-UniRule"/>
</dbReference>
<dbReference type="Gene3D" id="1.10.645.10">
    <property type="entry name" value="Cytochrome-c3 Hydrogenase, chain B"/>
    <property type="match status" value="1"/>
</dbReference>
<dbReference type="HAMAP" id="MF_01358">
    <property type="entry name" value="NDH1_NuoD"/>
    <property type="match status" value="1"/>
</dbReference>
<dbReference type="InterPro" id="IPR001135">
    <property type="entry name" value="NADH_Q_OxRdtase_suD"/>
</dbReference>
<dbReference type="InterPro" id="IPR014029">
    <property type="entry name" value="NADH_UbQ_OxRdtase_49kDa_CS"/>
</dbReference>
<dbReference type="InterPro" id="IPR022885">
    <property type="entry name" value="NDH1_su_D/H"/>
</dbReference>
<dbReference type="InterPro" id="IPR029014">
    <property type="entry name" value="NiFe-Hase_large"/>
</dbReference>
<dbReference type="NCBIfam" id="NF004739">
    <property type="entry name" value="PRK06075.1"/>
    <property type="match status" value="1"/>
</dbReference>
<dbReference type="NCBIfam" id="NF005649">
    <property type="entry name" value="PRK07415.1"/>
    <property type="match status" value="1"/>
</dbReference>
<dbReference type="PANTHER" id="PTHR11993:SF10">
    <property type="entry name" value="NADH DEHYDROGENASE [UBIQUINONE] IRON-SULFUR PROTEIN 2, MITOCHONDRIAL"/>
    <property type="match status" value="1"/>
</dbReference>
<dbReference type="PANTHER" id="PTHR11993">
    <property type="entry name" value="NADH-UBIQUINONE OXIDOREDUCTASE 49 KDA SUBUNIT"/>
    <property type="match status" value="1"/>
</dbReference>
<dbReference type="Pfam" id="PF00346">
    <property type="entry name" value="Complex1_49kDa"/>
    <property type="match status" value="1"/>
</dbReference>
<dbReference type="SUPFAM" id="SSF56762">
    <property type="entry name" value="HydB/Nqo4-like"/>
    <property type="match status" value="1"/>
</dbReference>
<dbReference type="PROSITE" id="PS00535">
    <property type="entry name" value="COMPLEX1_49K"/>
    <property type="match status" value="1"/>
</dbReference>
<protein>
    <recommendedName>
        <fullName evidence="1">NAD(P)H-quinone oxidoreductase subunit H</fullName>
        <ecNumber evidence="1">7.1.1.-</ecNumber>
    </recommendedName>
    <alternativeName>
        <fullName>NAD(P)H dehydrogenase subunit H</fullName>
    </alternativeName>
    <alternativeName>
        <fullName evidence="1">NADH-plastoquinone oxidoreductase subunit H</fullName>
    </alternativeName>
    <alternativeName>
        <fullName evidence="1">NDH-1 subunit H</fullName>
        <shortName evidence="1">NDH-H</shortName>
    </alternativeName>
</protein>
<organism>
    <name type="scientific">Prochlorococcus marinus (strain MIT 9515)</name>
    <dbReference type="NCBI Taxonomy" id="167542"/>
    <lineage>
        <taxon>Bacteria</taxon>
        <taxon>Bacillati</taxon>
        <taxon>Cyanobacteriota</taxon>
        <taxon>Cyanophyceae</taxon>
        <taxon>Synechococcales</taxon>
        <taxon>Prochlorococcaceae</taxon>
        <taxon>Prochlorococcus</taxon>
    </lineage>
</organism>
<keyword id="KW-0472">Membrane</keyword>
<keyword id="KW-0520">NAD</keyword>
<keyword id="KW-0521">NADP</keyword>
<keyword id="KW-0618">Plastoquinone</keyword>
<keyword id="KW-0874">Quinone</keyword>
<keyword id="KW-0793">Thylakoid</keyword>
<keyword id="KW-1278">Translocase</keyword>
<keyword id="KW-0813">Transport</keyword>
<feature type="chain" id="PRO_0000371913" description="NAD(P)H-quinone oxidoreductase subunit H">
    <location>
        <begin position="1"/>
        <end position="395"/>
    </location>
</feature>
<proteinExistence type="inferred from homology"/>
<evidence type="ECO:0000255" key="1">
    <source>
        <dbReference type="HAMAP-Rule" id="MF_01358"/>
    </source>
</evidence>